<organism>
    <name type="scientific">Haemophilus influenzae (strain ATCC 51907 / DSM 11121 / KW20 / Rd)</name>
    <dbReference type="NCBI Taxonomy" id="71421"/>
    <lineage>
        <taxon>Bacteria</taxon>
        <taxon>Pseudomonadati</taxon>
        <taxon>Pseudomonadota</taxon>
        <taxon>Gammaproteobacteria</taxon>
        <taxon>Pasteurellales</taxon>
        <taxon>Pasteurellaceae</taxon>
        <taxon>Haemophilus</taxon>
    </lineage>
</organism>
<feature type="signal peptide" evidence="1">
    <location>
        <begin position="1"/>
        <end position="18"/>
    </location>
</feature>
<feature type="chain" id="PRO_0000013968" description="Uncharacterized protein HI_1249">
    <location>
        <begin position="19"/>
        <end position="206"/>
    </location>
</feature>
<sequence length="206" mass="23440">MKTYSLLLGLFISFGVLAHPHAFIDIQTTPIIENNQLTGFSMKWTLDEPSSSAVIYDMKQARTKAEKQKLLDDVMGNIVSEHYFSYLYDAQNNKIKYSPRPKNYGINVQGLQLQYYFDVPLAHPQKLEKNTFSLQTYDPTYYVAMTYASKSAVDFSALSKNCQGKLIEPNVDEKIQAYASSLDKSQKNEDDSLGVMFAQKIIIQCE</sequence>
<reference key="1">
    <citation type="journal article" date="1995" name="Science">
        <title>Whole-genome random sequencing and assembly of Haemophilus influenzae Rd.</title>
        <authorList>
            <person name="Fleischmann R.D."/>
            <person name="Adams M.D."/>
            <person name="White O."/>
            <person name="Clayton R.A."/>
            <person name="Kirkness E.F."/>
            <person name="Kerlavage A.R."/>
            <person name="Bult C.J."/>
            <person name="Tomb J.-F."/>
            <person name="Dougherty B.A."/>
            <person name="Merrick J.M."/>
            <person name="McKenney K."/>
            <person name="Sutton G.G."/>
            <person name="FitzHugh W."/>
            <person name="Fields C.A."/>
            <person name="Gocayne J.D."/>
            <person name="Scott J.D."/>
            <person name="Shirley R."/>
            <person name="Liu L.-I."/>
            <person name="Glodek A."/>
            <person name="Kelley J.M."/>
            <person name="Weidman J.F."/>
            <person name="Phillips C.A."/>
            <person name="Spriggs T."/>
            <person name="Hedblom E."/>
            <person name="Cotton M.D."/>
            <person name="Utterback T.R."/>
            <person name="Hanna M.C."/>
            <person name="Nguyen D.T."/>
            <person name="Saudek D.M."/>
            <person name="Brandon R.C."/>
            <person name="Fine L.D."/>
            <person name="Fritchman J.L."/>
            <person name="Fuhrmann J.L."/>
            <person name="Geoghagen N.S.M."/>
            <person name="Gnehm C.L."/>
            <person name="McDonald L.A."/>
            <person name="Small K.V."/>
            <person name="Fraser C.M."/>
            <person name="Smith H.O."/>
            <person name="Venter J.C."/>
        </authorList>
    </citation>
    <scope>NUCLEOTIDE SEQUENCE [LARGE SCALE GENOMIC DNA]</scope>
    <source>
        <strain>ATCC 51907 / DSM 11121 / KW20 / Rd</strain>
    </source>
</reference>
<accession>P44137</accession>
<dbReference type="EMBL" id="L42023">
    <property type="protein sequence ID" value="AAC22908.1"/>
    <property type="molecule type" value="Genomic_DNA"/>
</dbReference>
<dbReference type="PIR" id="B64023">
    <property type="entry name" value="B64023"/>
</dbReference>
<dbReference type="RefSeq" id="NP_439405.1">
    <property type="nucleotide sequence ID" value="NC_000907.1"/>
</dbReference>
<dbReference type="SMR" id="P44137"/>
<dbReference type="STRING" id="71421.HI_1249"/>
<dbReference type="DNASU" id="950126"/>
<dbReference type="EnsemblBacteria" id="AAC22908">
    <property type="protein sequence ID" value="AAC22908"/>
    <property type="gene ID" value="HI_1249"/>
</dbReference>
<dbReference type="KEGG" id="hin:HI_1249"/>
<dbReference type="PATRIC" id="fig|71421.8.peg.1301"/>
<dbReference type="eggNOG" id="COG3683">
    <property type="taxonomic scope" value="Bacteria"/>
</dbReference>
<dbReference type="HOGENOM" id="CLU_088941_2_0_6"/>
<dbReference type="OrthoDB" id="5781652at2"/>
<dbReference type="PhylomeDB" id="P44137"/>
<dbReference type="BioCyc" id="HINF71421:G1GJ1-1280-MONOMER"/>
<dbReference type="Proteomes" id="UP000000579">
    <property type="component" value="Chromosome"/>
</dbReference>
<dbReference type="InterPro" id="IPR010412">
    <property type="entry name" value="DUF1007"/>
</dbReference>
<dbReference type="InterPro" id="IPR016537">
    <property type="entry name" value="UCP008159_ABC"/>
</dbReference>
<dbReference type="Pfam" id="PF06226">
    <property type="entry name" value="DUF1007"/>
    <property type="match status" value="1"/>
</dbReference>
<dbReference type="PIRSF" id="PIRSF008159">
    <property type="entry name" value="UCP008159_ABC"/>
    <property type="match status" value="1"/>
</dbReference>
<keyword id="KW-1185">Reference proteome</keyword>
<keyword id="KW-0732">Signal</keyword>
<protein>
    <recommendedName>
        <fullName>Uncharacterized protein HI_1249</fullName>
    </recommendedName>
</protein>
<gene>
    <name type="ordered locus">HI_1249</name>
</gene>
<evidence type="ECO:0000255" key="1"/>
<name>Y1249_HAEIN</name>
<proteinExistence type="inferred from homology"/>